<sequence>MTVLKNDRYLKALLREPVDMTPVWMMRQAGRYLPEYKATRAKAGDFMSLCRNADLACEVTLQPLRRYDLDAAILFSDILTIPDAMGLGLSFGVGEGPKFARPIDNKSAVQNLPIPDPEQELQYVMNAVRTIRRELKGEVPLIGFSGSPWTLATYMVEGGSSKAFTKIKKMMYSEPKILHLLLDKLADAVILYLNAQINAGVQAVMVFDTWGGVLGHREYLDFSLQYMHKIVDGLIRENDGYKVPVTLFTKGGGLWLEAMASTGCDALGLDWTVNLAEAKARVGHKVALQGNMDPSVLYASPARIEQEVQQILADFGQGSGHVFNLGHGIHQDVPEISPKVFVDAVHQYSIFYHQ</sequence>
<proteinExistence type="inferred from homology"/>
<gene>
    <name evidence="1" type="primary">hemE</name>
    <name type="ordered locus">HSM_0564</name>
</gene>
<name>DCUP_HISS2</name>
<feature type="chain" id="PRO_1000078076" description="Uroporphyrinogen decarboxylase">
    <location>
        <begin position="1"/>
        <end position="354"/>
    </location>
</feature>
<feature type="binding site" evidence="1">
    <location>
        <begin position="27"/>
        <end position="31"/>
    </location>
    <ligand>
        <name>substrate</name>
    </ligand>
</feature>
<feature type="binding site" evidence="1">
    <location>
        <position position="77"/>
    </location>
    <ligand>
        <name>substrate</name>
    </ligand>
</feature>
<feature type="binding site" evidence="1">
    <location>
        <position position="154"/>
    </location>
    <ligand>
        <name>substrate</name>
    </ligand>
</feature>
<feature type="binding site" evidence="1">
    <location>
        <position position="209"/>
    </location>
    <ligand>
        <name>substrate</name>
    </ligand>
</feature>
<feature type="binding site" evidence="1">
    <location>
        <position position="327"/>
    </location>
    <ligand>
        <name>substrate</name>
    </ligand>
</feature>
<feature type="site" description="Transition state stabilizer" evidence="1">
    <location>
        <position position="77"/>
    </location>
</feature>
<evidence type="ECO:0000255" key="1">
    <source>
        <dbReference type="HAMAP-Rule" id="MF_00218"/>
    </source>
</evidence>
<accession>B0US07</accession>
<reference key="1">
    <citation type="submission" date="2008-02" db="EMBL/GenBank/DDBJ databases">
        <title>Complete sequence of Haemophilus somnus 2336.</title>
        <authorList>
            <consortium name="US DOE Joint Genome Institute"/>
            <person name="Siddaramappa S."/>
            <person name="Duncan A.J."/>
            <person name="Challacombe J.F."/>
            <person name="Rainey D."/>
            <person name="Gillaspy A.F."/>
            <person name="Carson M."/>
            <person name="Gipson J."/>
            <person name="Gipson M."/>
            <person name="Bruce D."/>
            <person name="Detter J.C."/>
            <person name="Han C.S."/>
            <person name="Land M."/>
            <person name="Tapia R."/>
            <person name="Thompson L.S."/>
            <person name="Orvis J."/>
            <person name="Zaitshik J."/>
            <person name="Barnes G."/>
            <person name="Brettin T.S."/>
            <person name="Dyer D.W."/>
            <person name="Inzana T.J."/>
        </authorList>
    </citation>
    <scope>NUCLEOTIDE SEQUENCE [LARGE SCALE GENOMIC DNA]</scope>
    <source>
        <strain>2336</strain>
    </source>
</reference>
<organism>
    <name type="scientific">Histophilus somni (strain 2336)</name>
    <name type="common">Haemophilus somnus</name>
    <dbReference type="NCBI Taxonomy" id="228400"/>
    <lineage>
        <taxon>Bacteria</taxon>
        <taxon>Pseudomonadati</taxon>
        <taxon>Pseudomonadota</taxon>
        <taxon>Gammaproteobacteria</taxon>
        <taxon>Pasteurellales</taxon>
        <taxon>Pasteurellaceae</taxon>
        <taxon>Histophilus</taxon>
    </lineage>
</organism>
<comment type="function">
    <text evidence="1">Catalyzes the decarboxylation of four acetate groups of uroporphyrinogen-III to yield coproporphyrinogen-III.</text>
</comment>
<comment type="catalytic activity">
    <reaction evidence="1">
        <text>uroporphyrinogen III + 4 H(+) = coproporphyrinogen III + 4 CO2</text>
        <dbReference type="Rhea" id="RHEA:19865"/>
        <dbReference type="ChEBI" id="CHEBI:15378"/>
        <dbReference type="ChEBI" id="CHEBI:16526"/>
        <dbReference type="ChEBI" id="CHEBI:57308"/>
        <dbReference type="ChEBI" id="CHEBI:57309"/>
        <dbReference type="EC" id="4.1.1.37"/>
    </reaction>
</comment>
<comment type="pathway">
    <text evidence="1">Porphyrin-containing compound metabolism; protoporphyrin-IX biosynthesis; coproporphyrinogen-III from 5-aminolevulinate: step 4/4.</text>
</comment>
<comment type="subunit">
    <text evidence="1">Homodimer.</text>
</comment>
<comment type="subcellular location">
    <subcellularLocation>
        <location evidence="1">Cytoplasm</location>
    </subcellularLocation>
</comment>
<comment type="similarity">
    <text evidence="1">Belongs to the uroporphyrinogen decarboxylase family.</text>
</comment>
<dbReference type="EC" id="4.1.1.37" evidence="1"/>
<dbReference type="EMBL" id="CP000947">
    <property type="protein sequence ID" value="ACA32216.1"/>
    <property type="molecule type" value="Genomic_DNA"/>
</dbReference>
<dbReference type="RefSeq" id="WP_012341396.1">
    <property type="nucleotide sequence ID" value="NC_010519.1"/>
</dbReference>
<dbReference type="SMR" id="B0US07"/>
<dbReference type="STRING" id="228400.HSM_0564"/>
<dbReference type="GeneID" id="31486846"/>
<dbReference type="KEGG" id="hsm:HSM_0564"/>
<dbReference type="HOGENOM" id="CLU_040933_0_0_6"/>
<dbReference type="UniPathway" id="UPA00251">
    <property type="reaction ID" value="UER00321"/>
</dbReference>
<dbReference type="GO" id="GO:0005829">
    <property type="term" value="C:cytosol"/>
    <property type="evidence" value="ECO:0007669"/>
    <property type="project" value="TreeGrafter"/>
</dbReference>
<dbReference type="GO" id="GO:0004853">
    <property type="term" value="F:uroporphyrinogen decarboxylase activity"/>
    <property type="evidence" value="ECO:0007669"/>
    <property type="project" value="UniProtKB-UniRule"/>
</dbReference>
<dbReference type="GO" id="GO:0019353">
    <property type="term" value="P:protoporphyrinogen IX biosynthetic process from glutamate"/>
    <property type="evidence" value="ECO:0007669"/>
    <property type="project" value="TreeGrafter"/>
</dbReference>
<dbReference type="CDD" id="cd00717">
    <property type="entry name" value="URO-D"/>
    <property type="match status" value="1"/>
</dbReference>
<dbReference type="FunFam" id="3.20.20.210:FF:000001">
    <property type="entry name" value="Uroporphyrinogen decarboxylase"/>
    <property type="match status" value="1"/>
</dbReference>
<dbReference type="Gene3D" id="3.20.20.210">
    <property type="match status" value="1"/>
</dbReference>
<dbReference type="HAMAP" id="MF_00218">
    <property type="entry name" value="URO_D"/>
    <property type="match status" value="1"/>
</dbReference>
<dbReference type="InterPro" id="IPR038071">
    <property type="entry name" value="UROD/MetE-like_sf"/>
</dbReference>
<dbReference type="InterPro" id="IPR006361">
    <property type="entry name" value="Uroporphyrinogen_deCO2ase_HemE"/>
</dbReference>
<dbReference type="InterPro" id="IPR000257">
    <property type="entry name" value="Uroporphyrinogen_deCOase"/>
</dbReference>
<dbReference type="NCBIfam" id="TIGR01464">
    <property type="entry name" value="hemE"/>
    <property type="match status" value="1"/>
</dbReference>
<dbReference type="PANTHER" id="PTHR21091">
    <property type="entry name" value="METHYLTETRAHYDROFOLATE:HOMOCYSTEINE METHYLTRANSFERASE RELATED"/>
    <property type="match status" value="1"/>
</dbReference>
<dbReference type="PANTHER" id="PTHR21091:SF169">
    <property type="entry name" value="UROPORPHYRINOGEN DECARBOXYLASE"/>
    <property type="match status" value="1"/>
</dbReference>
<dbReference type="Pfam" id="PF01208">
    <property type="entry name" value="URO-D"/>
    <property type="match status" value="1"/>
</dbReference>
<dbReference type="SUPFAM" id="SSF51726">
    <property type="entry name" value="UROD/MetE-like"/>
    <property type="match status" value="1"/>
</dbReference>
<dbReference type="PROSITE" id="PS00906">
    <property type="entry name" value="UROD_1"/>
    <property type="match status" value="1"/>
</dbReference>
<dbReference type="PROSITE" id="PS00907">
    <property type="entry name" value="UROD_2"/>
    <property type="match status" value="1"/>
</dbReference>
<protein>
    <recommendedName>
        <fullName evidence="1">Uroporphyrinogen decarboxylase</fullName>
        <shortName evidence="1">UPD</shortName>
        <shortName evidence="1">URO-D</shortName>
        <ecNumber evidence="1">4.1.1.37</ecNumber>
    </recommendedName>
</protein>
<keyword id="KW-0963">Cytoplasm</keyword>
<keyword id="KW-0210">Decarboxylase</keyword>
<keyword id="KW-0456">Lyase</keyword>
<keyword id="KW-0627">Porphyrin biosynthesis</keyword>